<proteinExistence type="inferred from homology"/>
<sequence>MFLIITRDTMFFTAMKNILSKGNVVHIQNEEEIDVMLHQNAFVIIDTLMNNVFHSNFLTQIERLKPVHVIIFSPFNIKRCLGKVPVTFVPRTIAIIDFVALINGSYCSVPEADVSLSRKQHQVLSCIANQMTTEDILEKLKISLKTFYCHKHNIMMILNLKRINELVRHQHINYLV</sequence>
<protein>
    <recommendedName>
        <fullName>HTH-type transcriptional regulator DctR</fullName>
    </recommendedName>
</protein>
<evidence type="ECO:0000250" key="1"/>
<evidence type="ECO:0000255" key="2">
    <source>
        <dbReference type="PROSITE-ProRule" id="PRU00411"/>
    </source>
</evidence>
<feature type="chain" id="PRO_0000184146" description="HTH-type transcriptional regulator DctR">
    <location>
        <begin position="1"/>
        <end position="176"/>
    </location>
</feature>
<feature type="domain" description="HTH luxR-type" evidence="2">
    <location>
        <begin position="109"/>
        <end position="174"/>
    </location>
</feature>
<feature type="DNA-binding region" description="H-T-H motif" evidence="2">
    <location>
        <begin position="133"/>
        <end position="152"/>
    </location>
</feature>
<keyword id="KW-0238">DNA-binding</keyword>
<keyword id="KW-1185">Reference proteome</keyword>
<keyword id="KW-0804">Transcription</keyword>
<keyword id="KW-0805">Transcription regulation</keyword>
<dbReference type="EMBL" id="AE014075">
    <property type="protein sequence ID" value="AAN82742.1"/>
    <property type="molecule type" value="Genomic_DNA"/>
</dbReference>
<dbReference type="RefSeq" id="WP_000478618.1">
    <property type="nucleotide sequence ID" value="NZ_CP051263.1"/>
</dbReference>
<dbReference type="SMR" id="Q8FCK2"/>
<dbReference type="STRING" id="199310.c4306"/>
<dbReference type="KEGG" id="ecc:c4306"/>
<dbReference type="eggNOG" id="COG2197">
    <property type="taxonomic scope" value="Bacteria"/>
</dbReference>
<dbReference type="HOGENOM" id="CLU_1522929_0_0_6"/>
<dbReference type="BioCyc" id="ECOL199310:C4306-MONOMER"/>
<dbReference type="Proteomes" id="UP000001410">
    <property type="component" value="Chromosome"/>
</dbReference>
<dbReference type="GO" id="GO:0003677">
    <property type="term" value="F:DNA binding"/>
    <property type="evidence" value="ECO:0007669"/>
    <property type="project" value="UniProtKB-KW"/>
</dbReference>
<dbReference type="GO" id="GO:0006355">
    <property type="term" value="P:regulation of DNA-templated transcription"/>
    <property type="evidence" value="ECO:0007669"/>
    <property type="project" value="InterPro"/>
</dbReference>
<dbReference type="CDD" id="cd06170">
    <property type="entry name" value="LuxR_C_like"/>
    <property type="match status" value="1"/>
</dbReference>
<dbReference type="Gene3D" id="1.10.10.10">
    <property type="entry name" value="Winged helix-like DNA-binding domain superfamily/Winged helix DNA-binding domain"/>
    <property type="match status" value="1"/>
</dbReference>
<dbReference type="InterPro" id="IPR016032">
    <property type="entry name" value="Sig_transdc_resp-reg_C-effctor"/>
</dbReference>
<dbReference type="InterPro" id="IPR000792">
    <property type="entry name" value="Tscrpt_reg_LuxR_C"/>
</dbReference>
<dbReference type="InterPro" id="IPR036388">
    <property type="entry name" value="WH-like_DNA-bd_sf"/>
</dbReference>
<dbReference type="Pfam" id="PF00196">
    <property type="entry name" value="GerE"/>
    <property type="match status" value="1"/>
</dbReference>
<dbReference type="SMART" id="SM00421">
    <property type="entry name" value="HTH_LUXR"/>
    <property type="match status" value="1"/>
</dbReference>
<dbReference type="SUPFAM" id="SSF46894">
    <property type="entry name" value="C-terminal effector domain of the bipartite response regulators"/>
    <property type="match status" value="1"/>
</dbReference>
<dbReference type="PROSITE" id="PS50043">
    <property type="entry name" value="HTH_LUXR_2"/>
    <property type="match status" value="1"/>
</dbReference>
<accession>Q8FCK2</accession>
<organism>
    <name type="scientific">Escherichia coli O6:H1 (strain CFT073 / ATCC 700928 / UPEC)</name>
    <dbReference type="NCBI Taxonomy" id="199310"/>
    <lineage>
        <taxon>Bacteria</taxon>
        <taxon>Pseudomonadati</taxon>
        <taxon>Pseudomonadota</taxon>
        <taxon>Gammaproteobacteria</taxon>
        <taxon>Enterobacterales</taxon>
        <taxon>Enterobacteriaceae</taxon>
        <taxon>Escherichia</taxon>
    </lineage>
</organism>
<gene>
    <name type="primary">dctR</name>
    <name type="ordered locus">c4306</name>
</gene>
<reference key="1">
    <citation type="journal article" date="2002" name="Proc. Natl. Acad. Sci. U.S.A.">
        <title>Extensive mosaic structure revealed by the complete genome sequence of uropathogenic Escherichia coli.</title>
        <authorList>
            <person name="Welch R.A."/>
            <person name="Burland V."/>
            <person name="Plunkett G. III"/>
            <person name="Redford P."/>
            <person name="Roesch P."/>
            <person name="Rasko D."/>
            <person name="Buckles E.L."/>
            <person name="Liou S.-R."/>
            <person name="Boutin A."/>
            <person name="Hackett J."/>
            <person name="Stroud D."/>
            <person name="Mayhew G.F."/>
            <person name="Rose D.J."/>
            <person name="Zhou S."/>
            <person name="Schwartz D.C."/>
            <person name="Perna N.T."/>
            <person name="Mobley H.L.T."/>
            <person name="Donnenberg M.S."/>
            <person name="Blattner F.R."/>
        </authorList>
    </citation>
    <scope>NUCLEOTIDE SEQUENCE [LARGE SCALE GENOMIC DNA]</scope>
    <source>
        <strain>CFT073 / ATCC 700928 / UPEC</strain>
    </source>
</reference>
<comment type="function">
    <text evidence="1">May act as a transcriptional regulator of dctA.</text>
</comment>
<comment type="induction">
    <text evidence="1">By acidic conditions. Could be induced by EvgA via the induction of YdeO (By similarity).</text>
</comment>
<name>DCTR_ECOL6</name>